<name>LOLA_BORBR</name>
<sequence length="210" mass="22268">MHMIRRAAGALAVFAVAALAAAPAWAATAQEQLDTFVATVKGATGSFKQSTVSPQGATQPAQSGTFAFQRPGKFKWAVQLPYEQLIVSDGKQVFQYDPDLAQVTVRQVDQAIGTSPAAILFGAGQLGQAFAVSALPDRDGLQWLRAKPRNADAGFSQVDIGLRDNQPARIELVDAFGQTTRVELSNLLPGAVPASEFQFTPPQGVDVVKM</sequence>
<proteinExistence type="inferred from homology"/>
<reference key="1">
    <citation type="journal article" date="2003" name="Nat. Genet.">
        <title>Comparative analysis of the genome sequences of Bordetella pertussis, Bordetella parapertussis and Bordetella bronchiseptica.</title>
        <authorList>
            <person name="Parkhill J."/>
            <person name="Sebaihia M."/>
            <person name="Preston A."/>
            <person name="Murphy L.D."/>
            <person name="Thomson N.R."/>
            <person name="Harris D.E."/>
            <person name="Holden M.T.G."/>
            <person name="Churcher C.M."/>
            <person name="Bentley S.D."/>
            <person name="Mungall K.L."/>
            <person name="Cerdeno-Tarraga A.-M."/>
            <person name="Temple L."/>
            <person name="James K.D."/>
            <person name="Harris B."/>
            <person name="Quail M.A."/>
            <person name="Achtman M."/>
            <person name="Atkin R."/>
            <person name="Baker S."/>
            <person name="Basham D."/>
            <person name="Bason N."/>
            <person name="Cherevach I."/>
            <person name="Chillingworth T."/>
            <person name="Collins M."/>
            <person name="Cronin A."/>
            <person name="Davis P."/>
            <person name="Doggett J."/>
            <person name="Feltwell T."/>
            <person name="Goble A."/>
            <person name="Hamlin N."/>
            <person name="Hauser H."/>
            <person name="Holroyd S."/>
            <person name="Jagels K."/>
            <person name="Leather S."/>
            <person name="Moule S."/>
            <person name="Norberczak H."/>
            <person name="O'Neil S."/>
            <person name="Ormond D."/>
            <person name="Price C."/>
            <person name="Rabbinowitsch E."/>
            <person name="Rutter S."/>
            <person name="Sanders M."/>
            <person name="Saunders D."/>
            <person name="Seeger K."/>
            <person name="Sharp S."/>
            <person name="Simmonds M."/>
            <person name="Skelton J."/>
            <person name="Squares R."/>
            <person name="Squares S."/>
            <person name="Stevens K."/>
            <person name="Unwin L."/>
            <person name="Whitehead S."/>
            <person name="Barrell B.G."/>
            <person name="Maskell D.J."/>
        </authorList>
    </citation>
    <scope>NUCLEOTIDE SEQUENCE [LARGE SCALE GENOMIC DNA]</scope>
    <source>
        <strain>ATCC BAA-588 / NCTC 13252 / RB50</strain>
    </source>
</reference>
<organism>
    <name type="scientific">Bordetella bronchiseptica (strain ATCC BAA-588 / NCTC 13252 / RB50)</name>
    <name type="common">Alcaligenes bronchisepticus</name>
    <dbReference type="NCBI Taxonomy" id="257310"/>
    <lineage>
        <taxon>Bacteria</taxon>
        <taxon>Pseudomonadati</taxon>
        <taxon>Pseudomonadota</taxon>
        <taxon>Betaproteobacteria</taxon>
        <taxon>Burkholderiales</taxon>
        <taxon>Alcaligenaceae</taxon>
        <taxon>Bordetella</taxon>
    </lineage>
</organism>
<keyword id="KW-0143">Chaperone</keyword>
<keyword id="KW-0574">Periplasm</keyword>
<keyword id="KW-0653">Protein transport</keyword>
<keyword id="KW-0732">Signal</keyword>
<keyword id="KW-0813">Transport</keyword>
<feature type="signal peptide" evidence="1">
    <location>
        <begin position="1"/>
        <end position="26"/>
    </location>
</feature>
<feature type="chain" id="PRO_0000018249" description="Outer-membrane lipoprotein carrier protein">
    <location>
        <begin position="27"/>
        <end position="210"/>
    </location>
</feature>
<dbReference type="EMBL" id="BX640448">
    <property type="protein sequence ID" value="CAE35883.1"/>
    <property type="molecule type" value="Genomic_DNA"/>
</dbReference>
<dbReference type="RefSeq" id="WP_003814030.1">
    <property type="nucleotide sequence ID" value="NC_002927.3"/>
</dbReference>
<dbReference type="SMR" id="Q7WCM5"/>
<dbReference type="GeneID" id="56477606"/>
<dbReference type="KEGG" id="bbr:BB3910"/>
<dbReference type="eggNOG" id="COG2834">
    <property type="taxonomic scope" value="Bacteria"/>
</dbReference>
<dbReference type="HOGENOM" id="CLU_087560_0_1_4"/>
<dbReference type="Proteomes" id="UP000001027">
    <property type="component" value="Chromosome"/>
</dbReference>
<dbReference type="GO" id="GO:0030288">
    <property type="term" value="C:outer membrane-bounded periplasmic space"/>
    <property type="evidence" value="ECO:0007669"/>
    <property type="project" value="TreeGrafter"/>
</dbReference>
<dbReference type="GO" id="GO:0044874">
    <property type="term" value="P:lipoprotein localization to outer membrane"/>
    <property type="evidence" value="ECO:0007669"/>
    <property type="project" value="UniProtKB-UniRule"/>
</dbReference>
<dbReference type="GO" id="GO:0042953">
    <property type="term" value="P:lipoprotein transport"/>
    <property type="evidence" value="ECO:0007669"/>
    <property type="project" value="InterPro"/>
</dbReference>
<dbReference type="CDD" id="cd16325">
    <property type="entry name" value="LolA"/>
    <property type="match status" value="1"/>
</dbReference>
<dbReference type="Gene3D" id="2.50.20.10">
    <property type="entry name" value="Lipoprotein localisation LolA/LolB/LppX"/>
    <property type="match status" value="1"/>
</dbReference>
<dbReference type="HAMAP" id="MF_00240">
    <property type="entry name" value="LolA"/>
    <property type="match status" value="1"/>
</dbReference>
<dbReference type="InterPro" id="IPR029046">
    <property type="entry name" value="LolA/LolB/LppX"/>
</dbReference>
<dbReference type="InterPro" id="IPR004564">
    <property type="entry name" value="OM_lipoprot_carrier_LolA-like"/>
</dbReference>
<dbReference type="InterPro" id="IPR018323">
    <property type="entry name" value="OM_lipoprot_carrier_LolA_Pbac"/>
</dbReference>
<dbReference type="NCBIfam" id="TIGR00547">
    <property type="entry name" value="lolA"/>
    <property type="match status" value="1"/>
</dbReference>
<dbReference type="NCBIfam" id="NF000661">
    <property type="entry name" value="PRK00031.1-3"/>
    <property type="match status" value="1"/>
</dbReference>
<dbReference type="PANTHER" id="PTHR35869">
    <property type="entry name" value="OUTER-MEMBRANE LIPOPROTEIN CARRIER PROTEIN"/>
    <property type="match status" value="1"/>
</dbReference>
<dbReference type="PANTHER" id="PTHR35869:SF1">
    <property type="entry name" value="OUTER-MEMBRANE LIPOPROTEIN CARRIER PROTEIN"/>
    <property type="match status" value="1"/>
</dbReference>
<dbReference type="Pfam" id="PF03548">
    <property type="entry name" value="LolA"/>
    <property type="match status" value="1"/>
</dbReference>
<dbReference type="SUPFAM" id="SSF89392">
    <property type="entry name" value="Prokaryotic lipoproteins and lipoprotein localization factors"/>
    <property type="match status" value="1"/>
</dbReference>
<accession>Q7WCM5</accession>
<gene>
    <name evidence="1" type="primary">lolA</name>
    <name type="ordered locus">BB3910</name>
</gene>
<protein>
    <recommendedName>
        <fullName evidence="1">Outer-membrane lipoprotein carrier protein</fullName>
    </recommendedName>
</protein>
<evidence type="ECO:0000255" key="1">
    <source>
        <dbReference type="HAMAP-Rule" id="MF_00240"/>
    </source>
</evidence>
<comment type="function">
    <text evidence="1">Participates in the translocation of lipoproteins from the inner membrane to the outer membrane. Only forms a complex with a lipoprotein if the residue after the N-terminal Cys is not an aspartate (The Asp acts as a targeting signal to indicate that the lipoprotein should stay in the inner membrane).</text>
</comment>
<comment type="subunit">
    <text evidence="1">Monomer.</text>
</comment>
<comment type="subcellular location">
    <subcellularLocation>
        <location evidence="1">Periplasm</location>
    </subcellularLocation>
</comment>
<comment type="similarity">
    <text evidence="1">Belongs to the LolA family.</text>
</comment>